<accession>Q10017</accession>
<name>YSW1_CAEEL</name>
<evidence type="ECO:0000255" key="1"/>
<evidence type="ECO:0000305" key="2"/>
<gene>
    <name type="ORF">T25D10.1</name>
</gene>
<feature type="chain" id="PRO_0000065479" description="Uncharacterized protein T25D10.1">
    <location>
        <begin position="1"/>
        <end position="327"/>
    </location>
</feature>
<feature type="transmembrane region" description="Helical" evidence="1">
    <location>
        <begin position="13"/>
        <end position="33"/>
    </location>
</feature>
<reference key="1">
    <citation type="journal article" date="1998" name="Science">
        <title>Genome sequence of the nematode C. elegans: a platform for investigating biology.</title>
        <authorList>
            <consortium name="The C. elegans sequencing consortium"/>
        </authorList>
    </citation>
    <scope>NUCLEOTIDE SEQUENCE [LARGE SCALE GENOMIC DNA]</scope>
    <source>
        <strain>Bristol N2</strain>
    </source>
</reference>
<protein>
    <recommendedName>
        <fullName>Uncharacterized protein T25D10.1</fullName>
    </recommendedName>
</protein>
<sequence length="327" mass="38124">MFLRRRNLNSSRIICIISIIVLLLIIISLYPHKRTQFGRYSRRQKTIRFQHSTGEIGDQLFSLLSHLGVAKTLYRIPVINSANNSKLIDTLSNAMFTRFPSILQQFLIAIEPPTAVNRELGIENSSYEDPLTKFSEDTSSSLMVKGNGFKSFKYFDNLRSDIRLWVLEDAESVLEAQNLITKSQRNNFKICVHATLESNKNCSVKAIAQILNHYTNEYEDVMLIIASPFPEFTRFIFTNSRIRKYKTEKFSLISSSPEMQIIFSRIYCDVVFLTVPYSTHGWWMGYLAKDDNSHVFYFDPDMFPKNRTANQEDYFPPKWKKLSRKIQ</sequence>
<organism>
    <name type="scientific">Caenorhabditis elegans</name>
    <dbReference type="NCBI Taxonomy" id="6239"/>
    <lineage>
        <taxon>Eukaryota</taxon>
        <taxon>Metazoa</taxon>
        <taxon>Ecdysozoa</taxon>
        <taxon>Nematoda</taxon>
        <taxon>Chromadorea</taxon>
        <taxon>Rhabditida</taxon>
        <taxon>Rhabditina</taxon>
        <taxon>Rhabditomorpha</taxon>
        <taxon>Rhabditoidea</taxon>
        <taxon>Rhabditidae</taxon>
        <taxon>Peloderinae</taxon>
        <taxon>Caenorhabditis</taxon>
    </lineage>
</organism>
<comment type="subcellular location">
    <subcellularLocation>
        <location evidence="2">Membrane</location>
        <topology evidence="2">Single-pass membrane protein</topology>
    </subcellularLocation>
</comment>
<keyword id="KW-0472">Membrane</keyword>
<keyword id="KW-1185">Reference proteome</keyword>
<keyword id="KW-0812">Transmembrane</keyword>
<keyword id="KW-1133">Transmembrane helix</keyword>
<dbReference type="EMBL" id="FO081506">
    <property type="protein sequence ID" value="CCD72073.1"/>
    <property type="molecule type" value="Genomic_DNA"/>
</dbReference>
<dbReference type="PIR" id="T16939">
    <property type="entry name" value="T16939"/>
</dbReference>
<dbReference type="RefSeq" id="NP_495290.2">
    <property type="nucleotide sequence ID" value="NM_062889.6"/>
</dbReference>
<dbReference type="BioGRID" id="39401">
    <property type="interactions" value="3"/>
</dbReference>
<dbReference type="FunCoup" id="Q10017">
    <property type="interactions" value="7"/>
</dbReference>
<dbReference type="STRING" id="6239.T25D10.1.1"/>
<dbReference type="CAZy" id="GT11">
    <property type="family name" value="Glycosyltransferase Family 11"/>
</dbReference>
<dbReference type="PaxDb" id="6239-T25D10.1"/>
<dbReference type="EnsemblMetazoa" id="T25D10.1.1">
    <property type="protein sequence ID" value="T25D10.1.1"/>
    <property type="gene ID" value="WBGene00020799"/>
</dbReference>
<dbReference type="GeneID" id="174062"/>
<dbReference type="KEGG" id="cel:CELE_T25D10.1"/>
<dbReference type="UCSC" id="T25D10.1">
    <property type="organism name" value="c. elegans"/>
</dbReference>
<dbReference type="AGR" id="WB:WBGene00020799"/>
<dbReference type="CTD" id="174062"/>
<dbReference type="WormBase" id="T25D10.1">
    <property type="protein sequence ID" value="CE32213"/>
    <property type="gene ID" value="WBGene00020799"/>
</dbReference>
<dbReference type="eggNOG" id="ENOG502TDXG">
    <property type="taxonomic scope" value="Eukaryota"/>
</dbReference>
<dbReference type="GeneTree" id="ENSGT00530000064380"/>
<dbReference type="HOGENOM" id="CLU_772180_0_0_1"/>
<dbReference type="InParanoid" id="Q10017"/>
<dbReference type="OMA" id="IVIQPIT"/>
<dbReference type="OrthoDB" id="5783752at2759"/>
<dbReference type="PhylomeDB" id="Q10017"/>
<dbReference type="PRO" id="PR:Q10017"/>
<dbReference type="Proteomes" id="UP000001940">
    <property type="component" value="Chromosome II"/>
</dbReference>
<dbReference type="Bgee" id="WBGene00020799">
    <property type="expression patterns" value="Expressed in larva and 3 other cell types or tissues"/>
</dbReference>
<dbReference type="GO" id="GO:0016020">
    <property type="term" value="C:membrane"/>
    <property type="evidence" value="ECO:0007669"/>
    <property type="project" value="UniProtKB-SubCell"/>
</dbReference>
<dbReference type="GO" id="GO:0045087">
    <property type="term" value="P:innate immune response"/>
    <property type="evidence" value="ECO:0007007"/>
    <property type="project" value="WormBase"/>
</dbReference>
<dbReference type="GO" id="GO:0043413">
    <property type="term" value="P:macromolecule glycosylation"/>
    <property type="evidence" value="ECO:0000318"/>
    <property type="project" value="GO_Central"/>
</dbReference>
<dbReference type="InterPro" id="IPR052501">
    <property type="entry name" value="Alpha-1-2_FucT"/>
</dbReference>
<dbReference type="PANTHER" id="PTHR22898:SF5">
    <property type="entry name" value="PROTEIN CBG02648"/>
    <property type="match status" value="1"/>
</dbReference>
<dbReference type="PANTHER" id="PTHR22898">
    <property type="entry name" value="UNCHARACTERIZED GLYCOSOL TRANSFERASE-RELATED"/>
    <property type="match status" value="1"/>
</dbReference>
<proteinExistence type="predicted"/>